<keyword id="KW-0963">Cytoplasm</keyword>
<keyword id="KW-0206">Cytoskeleton</keyword>
<keyword id="KW-1185">Reference proteome</keyword>
<keyword id="KW-0677">Repeat</keyword>
<keyword id="KW-0853">WD repeat</keyword>
<evidence type="ECO:0000250" key="1"/>
<evidence type="ECO:0000256" key="2">
    <source>
        <dbReference type="SAM" id="MobiDB-lite"/>
    </source>
</evidence>
<evidence type="ECO:0000269" key="3">
    <source>
    </source>
</evidence>
<evidence type="ECO:0000305" key="4"/>
<proteinExistence type="inferred from homology"/>
<sequence>MTEPLDWRFSQTFGGKGNEDASDANVVPAIEFDQTGDFIAVGDKGGKVLLLKRTHDKQSSKKSKLPEYRFYSEFQSHEPEFDYLKSLEIEEKINKIKWCPKQNDAQFLLTTNDKTIKLWKVYEKKIKQVSTSATTTGPSYNGSLASNNTRSPSHTTYIYNSSGAHNMNNNMNNSNNNNNLNNFKIPKLTTRETVVTATPRKIFQNAHAYHINSISLNSDGETYISSDDLRIHLWNLNINTECFNVVDIKPTNMEDLTEVITSAEFHPTSCNIFMYSSSKGTIKLGDLRSSALCDNHAKVFEEYEDPSNKSFFSEIISSISDIKFSRDGRYILSRDFLTLKLWDINMENKPVKTIQIHDYLKPKLCDLYENDCIFDKFECTLNHDGTQMLTGSYHNYLHIYDRNSKQDVCLEASKQATKSKTKTLTTKMKLRSSKKEPKKPEDIHPDAIEYTKKTLHCAWHPKDNLIAVGAANTVYLYAATENK</sequence>
<dbReference type="EMBL" id="AAFI02000058">
    <property type="protein sequence ID" value="EAL65440.1"/>
    <property type="molecule type" value="Genomic_DNA"/>
</dbReference>
<dbReference type="RefSeq" id="XP_638845.1">
    <property type="nucleotide sequence ID" value="XM_633753.1"/>
</dbReference>
<dbReference type="SMR" id="Q54Q99"/>
<dbReference type="FunCoup" id="Q54Q99">
    <property type="interactions" value="523"/>
</dbReference>
<dbReference type="STRING" id="44689.Q54Q99"/>
<dbReference type="PaxDb" id="44689-DDB0191428"/>
<dbReference type="EnsemblProtists" id="EAL65440">
    <property type="protein sequence ID" value="EAL65440"/>
    <property type="gene ID" value="DDB_G0283905"/>
</dbReference>
<dbReference type="GeneID" id="8624370"/>
<dbReference type="KEGG" id="ddi:DDB_G0283905"/>
<dbReference type="dictyBase" id="DDB_G0283905">
    <property type="gene designation" value="phr2aB"/>
</dbReference>
<dbReference type="VEuPathDB" id="AmoebaDB:DDB_G0283905"/>
<dbReference type="eggNOG" id="KOG1354">
    <property type="taxonomic scope" value="Eukaryota"/>
</dbReference>
<dbReference type="HOGENOM" id="CLU_021713_3_3_1"/>
<dbReference type="InParanoid" id="Q54Q99"/>
<dbReference type="OMA" id="NQIKWCR"/>
<dbReference type="PhylomeDB" id="Q54Q99"/>
<dbReference type="Reactome" id="R-DDI-69231">
    <property type="pathway name" value="Cyclin D associated events in G1"/>
</dbReference>
<dbReference type="Reactome" id="R-DDI-69273">
    <property type="pathway name" value="Cyclin A/B1/B2 associated events during G2/M transition"/>
</dbReference>
<dbReference type="PRO" id="PR:Q54Q99"/>
<dbReference type="Proteomes" id="UP000002195">
    <property type="component" value="Chromosome 4"/>
</dbReference>
<dbReference type="GO" id="GO:0005813">
    <property type="term" value="C:centrosome"/>
    <property type="evidence" value="ECO:0007669"/>
    <property type="project" value="UniProtKB-SubCell"/>
</dbReference>
<dbReference type="GO" id="GO:0005829">
    <property type="term" value="C:cytosol"/>
    <property type="evidence" value="ECO:0007669"/>
    <property type="project" value="UniProtKB-SubCell"/>
</dbReference>
<dbReference type="GO" id="GO:0000159">
    <property type="term" value="C:protein phosphatase type 2A complex"/>
    <property type="evidence" value="ECO:0000314"/>
    <property type="project" value="dictyBase"/>
</dbReference>
<dbReference type="GO" id="GO:0017020">
    <property type="term" value="F:myosin phosphatase regulator activity"/>
    <property type="evidence" value="ECO:0000314"/>
    <property type="project" value="dictyBase"/>
</dbReference>
<dbReference type="GO" id="GO:0019888">
    <property type="term" value="F:protein phosphatase regulator activity"/>
    <property type="evidence" value="ECO:0000314"/>
    <property type="project" value="dictyBase"/>
</dbReference>
<dbReference type="GO" id="GO:0031034">
    <property type="term" value="P:myosin filament assembly"/>
    <property type="evidence" value="ECO:0000314"/>
    <property type="project" value="dictyBase"/>
</dbReference>
<dbReference type="FunFam" id="2.130.10.10:FF:000609">
    <property type="entry name" value="Serine/threonine-protein phosphatase 2A 55 kDa regulatory subunit B"/>
    <property type="match status" value="1"/>
</dbReference>
<dbReference type="Gene3D" id="2.130.10.10">
    <property type="entry name" value="YVTN repeat-like/Quinoprotein amine dehydrogenase"/>
    <property type="match status" value="2"/>
</dbReference>
<dbReference type="InterPro" id="IPR000009">
    <property type="entry name" value="PP2A_PR55"/>
</dbReference>
<dbReference type="InterPro" id="IPR018067">
    <property type="entry name" value="PP2A_PR55_CS"/>
</dbReference>
<dbReference type="InterPro" id="IPR015943">
    <property type="entry name" value="WD40/YVTN_repeat-like_dom_sf"/>
</dbReference>
<dbReference type="InterPro" id="IPR036322">
    <property type="entry name" value="WD40_repeat_dom_sf"/>
</dbReference>
<dbReference type="InterPro" id="IPR001680">
    <property type="entry name" value="WD40_rpt"/>
</dbReference>
<dbReference type="PANTHER" id="PTHR11871">
    <property type="entry name" value="PROTEIN PHOSPHATASE PP2A REGULATORY SUBUNIT B"/>
    <property type="match status" value="1"/>
</dbReference>
<dbReference type="Pfam" id="PF00400">
    <property type="entry name" value="WD40"/>
    <property type="match status" value="1"/>
</dbReference>
<dbReference type="PIRSF" id="PIRSF037309">
    <property type="entry name" value="PP2A_PR55"/>
    <property type="match status" value="1"/>
</dbReference>
<dbReference type="PRINTS" id="PR00600">
    <property type="entry name" value="PP2APR55"/>
</dbReference>
<dbReference type="SMART" id="SM00320">
    <property type="entry name" value="WD40"/>
    <property type="match status" value="7"/>
</dbReference>
<dbReference type="SUPFAM" id="SSF50978">
    <property type="entry name" value="WD40 repeat-like"/>
    <property type="match status" value="1"/>
</dbReference>
<dbReference type="PROSITE" id="PS01024">
    <property type="entry name" value="PR55_1"/>
    <property type="match status" value="1"/>
</dbReference>
<dbReference type="PROSITE" id="PS01025">
    <property type="entry name" value="PR55_2"/>
    <property type="match status" value="1"/>
</dbReference>
<dbReference type="PROSITE" id="PS00678">
    <property type="entry name" value="WD_REPEATS_1"/>
    <property type="match status" value="1"/>
</dbReference>
<name>PH2AB_DICDI</name>
<organism>
    <name type="scientific">Dictyostelium discoideum</name>
    <name type="common">Social amoeba</name>
    <dbReference type="NCBI Taxonomy" id="44689"/>
    <lineage>
        <taxon>Eukaryota</taxon>
        <taxon>Amoebozoa</taxon>
        <taxon>Evosea</taxon>
        <taxon>Eumycetozoa</taxon>
        <taxon>Dictyostelia</taxon>
        <taxon>Dictyosteliales</taxon>
        <taxon>Dictyosteliaceae</taxon>
        <taxon>Dictyostelium</taxon>
    </lineage>
</organism>
<reference key="1">
    <citation type="journal article" date="2005" name="Nature">
        <title>The genome of the social amoeba Dictyostelium discoideum.</title>
        <authorList>
            <person name="Eichinger L."/>
            <person name="Pachebat J.A."/>
            <person name="Gloeckner G."/>
            <person name="Rajandream M.A."/>
            <person name="Sucgang R."/>
            <person name="Berriman M."/>
            <person name="Song J."/>
            <person name="Olsen R."/>
            <person name="Szafranski K."/>
            <person name="Xu Q."/>
            <person name="Tunggal B."/>
            <person name="Kummerfeld S."/>
            <person name="Madera M."/>
            <person name="Konfortov B.A."/>
            <person name="Rivero F."/>
            <person name="Bankier A.T."/>
            <person name="Lehmann R."/>
            <person name="Hamlin N."/>
            <person name="Davies R."/>
            <person name="Gaudet P."/>
            <person name="Fey P."/>
            <person name="Pilcher K."/>
            <person name="Chen G."/>
            <person name="Saunders D."/>
            <person name="Sodergren E.J."/>
            <person name="Davis P."/>
            <person name="Kerhornou A."/>
            <person name="Nie X."/>
            <person name="Hall N."/>
            <person name="Anjard C."/>
            <person name="Hemphill L."/>
            <person name="Bason N."/>
            <person name="Farbrother P."/>
            <person name="Desany B."/>
            <person name="Just E."/>
            <person name="Morio T."/>
            <person name="Rost R."/>
            <person name="Churcher C.M."/>
            <person name="Cooper J."/>
            <person name="Haydock S."/>
            <person name="van Driessche N."/>
            <person name="Cronin A."/>
            <person name="Goodhead I."/>
            <person name="Muzny D.M."/>
            <person name="Mourier T."/>
            <person name="Pain A."/>
            <person name="Lu M."/>
            <person name="Harper D."/>
            <person name="Lindsay R."/>
            <person name="Hauser H."/>
            <person name="James K.D."/>
            <person name="Quiles M."/>
            <person name="Madan Babu M."/>
            <person name="Saito T."/>
            <person name="Buchrieser C."/>
            <person name="Wardroper A."/>
            <person name="Felder M."/>
            <person name="Thangavelu M."/>
            <person name="Johnson D."/>
            <person name="Knights A."/>
            <person name="Loulseged H."/>
            <person name="Mungall K.L."/>
            <person name="Oliver K."/>
            <person name="Price C."/>
            <person name="Quail M.A."/>
            <person name="Urushihara H."/>
            <person name="Hernandez J."/>
            <person name="Rabbinowitsch E."/>
            <person name="Steffen D."/>
            <person name="Sanders M."/>
            <person name="Ma J."/>
            <person name="Kohara Y."/>
            <person name="Sharp S."/>
            <person name="Simmonds M.N."/>
            <person name="Spiegler S."/>
            <person name="Tivey A."/>
            <person name="Sugano S."/>
            <person name="White B."/>
            <person name="Walker D."/>
            <person name="Woodward J.R."/>
            <person name="Winckler T."/>
            <person name="Tanaka Y."/>
            <person name="Shaulsky G."/>
            <person name="Schleicher M."/>
            <person name="Weinstock G.M."/>
            <person name="Rosenthal A."/>
            <person name="Cox E.C."/>
            <person name="Chisholm R.L."/>
            <person name="Gibbs R.A."/>
            <person name="Loomis W.F."/>
            <person name="Platzer M."/>
            <person name="Kay R.R."/>
            <person name="Williams J.G."/>
            <person name="Dear P.H."/>
            <person name="Noegel A.A."/>
            <person name="Barrell B.G."/>
            <person name="Kuspa A."/>
        </authorList>
    </citation>
    <scope>NUCLEOTIDE SEQUENCE [LARGE SCALE GENOMIC DNA]</scope>
    <source>
        <strain>AX4</strain>
    </source>
</reference>
<reference key="2">
    <citation type="journal article" date="2008" name="Differentiation">
        <title>The function of PP2A/B56 in non-metazoan multicellular development.</title>
        <authorList>
            <person name="Lee N.-S."/>
            <person name="Veeranki S."/>
            <person name="Kim B."/>
            <person name="Kim L."/>
        </authorList>
    </citation>
    <scope>SUBCELLULAR LOCATION</scope>
</reference>
<accession>Q54Q99</accession>
<gene>
    <name type="primary">phr2aB</name>
    <name type="synonym">pppD</name>
    <name type="ORF">DDB_G0283905</name>
</gene>
<feature type="chain" id="PRO_0000367476" description="Serine/threonine-protein phosphatase 2A regulatory subunit phr2AB">
    <location>
        <begin position="1"/>
        <end position="483"/>
    </location>
</feature>
<feature type="repeat" description="WD 1">
    <location>
        <begin position="22"/>
        <end position="61"/>
    </location>
</feature>
<feature type="repeat" description="WD 2">
    <location>
        <begin position="88"/>
        <end position="129"/>
    </location>
</feature>
<feature type="repeat" description="WD 3">
    <location>
        <begin position="206"/>
        <end position="244"/>
    </location>
</feature>
<feature type="repeat" description="WD 4">
    <location>
        <begin position="255"/>
        <end position="295"/>
    </location>
</feature>
<feature type="repeat" description="WD 5">
    <location>
        <begin position="314"/>
        <end position="352"/>
    </location>
</feature>
<feature type="repeat" description="WD 6">
    <location>
        <begin position="369"/>
        <end position="410"/>
    </location>
</feature>
<feature type="repeat" description="WD 7">
    <location>
        <begin position="449"/>
        <end position="483"/>
    </location>
</feature>
<feature type="region of interest" description="Disordered" evidence="2">
    <location>
        <begin position="132"/>
        <end position="152"/>
    </location>
</feature>
<feature type="region of interest" description="Disordered" evidence="2">
    <location>
        <begin position="421"/>
        <end position="443"/>
    </location>
</feature>
<feature type="compositionally biased region" description="Basic and acidic residues" evidence="2">
    <location>
        <begin position="433"/>
        <end position="443"/>
    </location>
</feature>
<protein>
    <recommendedName>
        <fullName>Serine/threonine-protein phosphatase 2A regulatory subunit phr2AB</fullName>
    </recommendedName>
    <alternativeName>
        <fullName>Protein phosphatase 2A 55 kDa regulatory subunit</fullName>
    </alternativeName>
    <alternativeName>
        <fullName>Protein phosphatase 2A B55 regulatory subunit</fullName>
    </alternativeName>
    <alternativeName>
        <fullName>Protein phosphatase 2A PR55 regulatory subunit</fullName>
    </alternativeName>
    <alternativeName>
        <fullName>Protein phosphatase 2A regulatory B subunit</fullName>
    </alternativeName>
</protein>
<comment type="function">
    <text evidence="4">The B regulatory subunit might modulate substrate selectivity and catalytic activity, and might also direct the localization of the catalytic enzyme to a particular subcellular compartment.</text>
</comment>
<comment type="subunit">
    <text evidence="1">PP2A consists of a trimeric holoenzyme, composed of a 37 kDa catalytic subunit (C subunit) and a 65 kDa constant regulatory subunit (A subunit), that associates with a variety of regulatory subunits (B subunit) such as phr2AB (B55) and psrA (B56 homolog). The trimer may partially dissociates into a core 'AC' dimer equally active compared to the trimer (By similarity).</text>
</comment>
<comment type="subcellular location">
    <subcellularLocation>
        <location evidence="3">Cytoplasm</location>
        <location evidence="3">Cytosol</location>
    </subcellularLocation>
    <subcellularLocation>
        <location evidence="3">Cytoplasm</location>
        <location evidence="3">Cytoskeleton</location>
        <location evidence="3">Microtubule organizing center</location>
        <location evidence="3">Centrosome</location>
    </subcellularLocation>
</comment>
<comment type="similarity">
    <text evidence="4">Belongs to the phosphatase 2A regulatory subunit B family.</text>
</comment>